<evidence type="ECO:0000255" key="1">
    <source>
        <dbReference type="HAMAP-Rule" id="MF_01217"/>
    </source>
</evidence>
<evidence type="ECO:0000255" key="2">
    <source>
        <dbReference type="PROSITE-ProRule" id="PRU00258"/>
    </source>
</evidence>
<proteinExistence type="inferred from homology"/>
<dbReference type="EMBL" id="CP000425">
    <property type="protein sequence ID" value="ABJ72375.1"/>
    <property type="molecule type" value="Genomic_DNA"/>
</dbReference>
<dbReference type="RefSeq" id="WP_003132501.1">
    <property type="nucleotide sequence ID" value="NC_008527.1"/>
</dbReference>
<dbReference type="SMR" id="Q030J7"/>
<dbReference type="KEGG" id="llc:LACR_0822"/>
<dbReference type="HOGENOM" id="CLU_108696_5_0_9"/>
<dbReference type="UniPathway" id="UPA00094"/>
<dbReference type="Proteomes" id="UP000000240">
    <property type="component" value="Chromosome"/>
</dbReference>
<dbReference type="GO" id="GO:0005737">
    <property type="term" value="C:cytoplasm"/>
    <property type="evidence" value="ECO:0007669"/>
    <property type="project" value="UniProtKB-SubCell"/>
</dbReference>
<dbReference type="GO" id="GO:0000036">
    <property type="term" value="F:acyl carrier activity"/>
    <property type="evidence" value="ECO:0007669"/>
    <property type="project" value="UniProtKB-UniRule"/>
</dbReference>
<dbReference type="Gene3D" id="1.10.1200.10">
    <property type="entry name" value="ACP-like"/>
    <property type="match status" value="1"/>
</dbReference>
<dbReference type="HAMAP" id="MF_01217">
    <property type="entry name" value="Acyl_carrier"/>
    <property type="match status" value="1"/>
</dbReference>
<dbReference type="InterPro" id="IPR003231">
    <property type="entry name" value="ACP"/>
</dbReference>
<dbReference type="InterPro" id="IPR036736">
    <property type="entry name" value="ACP-like_sf"/>
</dbReference>
<dbReference type="InterPro" id="IPR009081">
    <property type="entry name" value="PP-bd_ACP"/>
</dbReference>
<dbReference type="NCBIfam" id="NF002150">
    <property type="entry name" value="PRK00982.1-4"/>
    <property type="match status" value="1"/>
</dbReference>
<dbReference type="Pfam" id="PF00550">
    <property type="entry name" value="PP-binding"/>
    <property type="match status" value="1"/>
</dbReference>
<dbReference type="SUPFAM" id="SSF47336">
    <property type="entry name" value="ACP-like"/>
    <property type="match status" value="1"/>
</dbReference>
<dbReference type="PROSITE" id="PS50075">
    <property type="entry name" value="CARRIER"/>
    <property type="match status" value="1"/>
</dbReference>
<keyword id="KW-0963">Cytoplasm</keyword>
<keyword id="KW-0275">Fatty acid biosynthesis</keyword>
<keyword id="KW-0276">Fatty acid metabolism</keyword>
<keyword id="KW-0444">Lipid biosynthesis</keyword>
<keyword id="KW-0443">Lipid metabolism</keyword>
<keyword id="KW-0596">Phosphopantetheine</keyword>
<keyword id="KW-0597">Phosphoprotein</keyword>
<feature type="chain" id="PRO_1000066630" description="Acyl carrier protein">
    <location>
        <begin position="1"/>
        <end position="73"/>
    </location>
</feature>
<feature type="domain" description="Carrier" evidence="2">
    <location>
        <begin position="1"/>
        <end position="73"/>
    </location>
</feature>
<feature type="modified residue" description="O-(pantetheine 4'-phosphoryl)serine" evidence="2">
    <location>
        <position position="35"/>
    </location>
</feature>
<reference key="1">
    <citation type="journal article" date="2006" name="Proc. Natl. Acad. Sci. U.S.A.">
        <title>Comparative genomics of the lactic acid bacteria.</title>
        <authorList>
            <person name="Makarova K.S."/>
            <person name="Slesarev A."/>
            <person name="Wolf Y.I."/>
            <person name="Sorokin A."/>
            <person name="Mirkin B."/>
            <person name="Koonin E.V."/>
            <person name="Pavlov A."/>
            <person name="Pavlova N."/>
            <person name="Karamychev V."/>
            <person name="Polouchine N."/>
            <person name="Shakhova V."/>
            <person name="Grigoriev I."/>
            <person name="Lou Y."/>
            <person name="Rohksar D."/>
            <person name="Lucas S."/>
            <person name="Huang K."/>
            <person name="Goodstein D.M."/>
            <person name="Hawkins T."/>
            <person name="Plengvidhya V."/>
            <person name="Welker D."/>
            <person name="Hughes J."/>
            <person name="Goh Y."/>
            <person name="Benson A."/>
            <person name="Baldwin K."/>
            <person name="Lee J.-H."/>
            <person name="Diaz-Muniz I."/>
            <person name="Dosti B."/>
            <person name="Smeianov V."/>
            <person name="Wechter W."/>
            <person name="Barabote R."/>
            <person name="Lorca G."/>
            <person name="Altermann E."/>
            <person name="Barrangou R."/>
            <person name="Ganesan B."/>
            <person name="Xie Y."/>
            <person name="Rawsthorne H."/>
            <person name="Tamir D."/>
            <person name="Parker C."/>
            <person name="Breidt F."/>
            <person name="Broadbent J.R."/>
            <person name="Hutkins R."/>
            <person name="O'Sullivan D."/>
            <person name="Steele J."/>
            <person name="Unlu G."/>
            <person name="Saier M.H. Jr."/>
            <person name="Klaenhammer T."/>
            <person name="Richardson P."/>
            <person name="Kozyavkin S."/>
            <person name="Weimer B.C."/>
            <person name="Mills D.A."/>
        </authorList>
    </citation>
    <scope>NUCLEOTIDE SEQUENCE [LARGE SCALE GENOMIC DNA]</scope>
    <source>
        <strain>SK11</strain>
    </source>
</reference>
<name>ACP_LACLS</name>
<protein>
    <recommendedName>
        <fullName evidence="1">Acyl carrier protein</fullName>
        <shortName evidence="1">ACP</shortName>
    </recommendedName>
</protein>
<accession>Q030J7</accession>
<comment type="function">
    <text evidence="1">Carrier of the growing fatty acid chain in fatty acid biosynthesis.</text>
</comment>
<comment type="pathway">
    <text evidence="1">Lipid metabolism; fatty acid biosynthesis.</text>
</comment>
<comment type="subcellular location">
    <subcellularLocation>
        <location evidence="1">Cytoplasm</location>
    </subcellularLocation>
</comment>
<comment type="PTM">
    <text evidence="1">4'-phosphopantetheine is transferred from CoA to a specific serine of apo-ACP by AcpS. This modification is essential for activity because fatty acids are bound in thioester linkage to the sulfhydryl of the prosthetic group.</text>
</comment>
<comment type="similarity">
    <text evidence="1">Belongs to the acyl carrier protein (ACP) family.</text>
</comment>
<organism>
    <name type="scientific">Lactococcus lactis subsp. cremoris (strain SK11)</name>
    <dbReference type="NCBI Taxonomy" id="272622"/>
    <lineage>
        <taxon>Bacteria</taxon>
        <taxon>Bacillati</taxon>
        <taxon>Bacillota</taxon>
        <taxon>Bacilli</taxon>
        <taxon>Lactobacillales</taxon>
        <taxon>Streptococcaceae</taxon>
        <taxon>Lactococcus</taxon>
        <taxon>Lactococcus cremoris subsp. cremoris</taxon>
    </lineage>
</organism>
<sequence length="73" mass="8401">MAVFEKVQDIIVDELGKEKEEVTLETSFEELDADSLDLFQIINDIEDEFDVEVDTEADMKTVADLVKYVENNK</sequence>
<gene>
    <name evidence="1" type="primary">acpP</name>
    <name type="ordered locus">LACR_0822</name>
</gene>